<dbReference type="EC" id="2.7.1.30" evidence="1"/>
<dbReference type="EMBL" id="CP000671">
    <property type="protein sequence ID" value="ABQ99045.1"/>
    <property type="molecule type" value="Genomic_DNA"/>
</dbReference>
<dbReference type="SMR" id="A5UE44"/>
<dbReference type="KEGG" id="hip:CGSHiEE_08730"/>
<dbReference type="HOGENOM" id="CLU_009281_2_3_6"/>
<dbReference type="UniPathway" id="UPA00618">
    <property type="reaction ID" value="UER00672"/>
</dbReference>
<dbReference type="GO" id="GO:0005829">
    <property type="term" value="C:cytosol"/>
    <property type="evidence" value="ECO:0007669"/>
    <property type="project" value="TreeGrafter"/>
</dbReference>
<dbReference type="GO" id="GO:0005524">
    <property type="term" value="F:ATP binding"/>
    <property type="evidence" value="ECO:0007669"/>
    <property type="project" value="UniProtKB-UniRule"/>
</dbReference>
<dbReference type="GO" id="GO:0004370">
    <property type="term" value="F:glycerol kinase activity"/>
    <property type="evidence" value="ECO:0000250"/>
    <property type="project" value="UniProtKB"/>
</dbReference>
<dbReference type="GO" id="GO:0019563">
    <property type="term" value="P:glycerol catabolic process"/>
    <property type="evidence" value="ECO:0007669"/>
    <property type="project" value="UniProtKB-UniRule"/>
</dbReference>
<dbReference type="GO" id="GO:0006071">
    <property type="term" value="P:glycerol metabolic process"/>
    <property type="evidence" value="ECO:0000250"/>
    <property type="project" value="UniProtKB"/>
</dbReference>
<dbReference type="GO" id="GO:0006072">
    <property type="term" value="P:glycerol-3-phosphate metabolic process"/>
    <property type="evidence" value="ECO:0007669"/>
    <property type="project" value="InterPro"/>
</dbReference>
<dbReference type="CDD" id="cd07786">
    <property type="entry name" value="FGGY_EcGK_like"/>
    <property type="match status" value="1"/>
</dbReference>
<dbReference type="FunFam" id="3.30.420.40:FF:000007">
    <property type="entry name" value="Glycerol kinase"/>
    <property type="match status" value="1"/>
</dbReference>
<dbReference type="FunFam" id="3.30.420.40:FF:000008">
    <property type="entry name" value="Glycerol kinase"/>
    <property type="match status" value="1"/>
</dbReference>
<dbReference type="Gene3D" id="3.30.420.40">
    <property type="match status" value="2"/>
</dbReference>
<dbReference type="HAMAP" id="MF_00186">
    <property type="entry name" value="Glycerol_kin"/>
    <property type="match status" value="1"/>
</dbReference>
<dbReference type="InterPro" id="IPR043129">
    <property type="entry name" value="ATPase_NBD"/>
</dbReference>
<dbReference type="InterPro" id="IPR000577">
    <property type="entry name" value="Carb_kinase_FGGY"/>
</dbReference>
<dbReference type="InterPro" id="IPR018483">
    <property type="entry name" value="Carb_kinase_FGGY_CS"/>
</dbReference>
<dbReference type="InterPro" id="IPR018485">
    <property type="entry name" value="FGGY_C"/>
</dbReference>
<dbReference type="InterPro" id="IPR018484">
    <property type="entry name" value="FGGY_N"/>
</dbReference>
<dbReference type="InterPro" id="IPR005999">
    <property type="entry name" value="Glycerol_kin"/>
</dbReference>
<dbReference type="NCBIfam" id="TIGR01311">
    <property type="entry name" value="glycerol_kin"/>
    <property type="match status" value="1"/>
</dbReference>
<dbReference type="NCBIfam" id="NF000756">
    <property type="entry name" value="PRK00047.1"/>
    <property type="match status" value="1"/>
</dbReference>
<dbReference type="PANTHER" id="PTHR10196:SF69">
    <property type="entry name" value="GLYCEROL KINASE"/>
    <property type="match status" value="1"/>
</dbReference>
<dbReference type="PANTHER" id="PTHR10196">
    <property type="entry name" value="SUGAR KINASE"/>
    <property type="match status" value="1"/>
</dbReference>
<dbReference type="Pfam" id="PF02782">
    <property type="entry name" value="FGGY_C"/>
    <property type="match status" value="1"/>
</dbReference>
<dbReference type="Pfam" id="PF00370">
    <property type="entry name" value="FGGY_N"/>
    <property type="match status" value="1"/>
</dbReference>
<dbReference type="PIRSF" id="PIRSF000538">
    <property type="entry name" value="GlpK"/>
    <property type="match status" value="1"/>
</dbReference>
<dbReference type="SUPFAM" id="SSF53067">
    <property type="entry name" value="Actin-like ATPase domain"/>
    <property type="match status" value="2"/>
</dbReference>
<dbReference type="PROSITE" id="PS00933">
    <property type="entry name" value="FGGY_KINASES_1"/>
    <property type="match status" value="1"/>
</dbReference>
<dbReference type="PROSITE" id="PS00445">
    <property type="entry name" value="FGGY_KINASES_2"/>
    <property type="match status" value="1"/>
</dbReference>
<proteinExistence type="inferred from homology"/>
<evidence type="ECO:0000255" key="1">
    <source>
        <dbReference type="HAMAP-Rule" id="MF_00186"/>
    </source>
</evidence>
<sequence length="503" mass="56069">MTDKKYIIALDQGTTSSRAVLLDHNANVVEIAQREFTQIYPRAGWVEHNPMEIWATQSSTLNEVVAKAGITSDEIAAIGITNQRETTIVWEKSTGTPVYNAIVWQCRRTADITDKLKADGHEEYIRNTTGLVVDPYFSGTKVKWILDNVEGAREKAERGELLFGTVDTWLVWKLTQGRVHVTDYTNASRTMLFNIHTKQWDDKMLEILNIPRSILPEVRNSSEIYGQTNIGGKGGVRIPVAGIAGDQQAALYGHLCVHAGQAKNTYGTGCFMLLHTGNKAITSKNGLLTTIACNAKGEPEYALEGSVFIAGASIQWLRDELKIVHDSFDSEYFAQKVTDSNGVYVVPAFTGLGAPYWDPYARGAIFGLSRGANCNHIVRATLQSIAYQTRDVLEAMQSDSGERLQYLRVDGGATNNNFLMQFQADILDVNVERPVVKEVTALGAAYLAGLATGFWKDLDELRDKARVERTFSPDSDNEKRERRYKGWKKAVKRSLEWAKEDEE</sequence>
<accession>A5UE44</accession>
<protein>
    <recommendedName>
        <fullName evidence="1">Glycerol kinase</fullName>
        <ecNumber evidence="1">2.7.1.30</ecNumber>
    </recommendedName>
    <alternativeName>
        <fullName evidence="1">ATP:glycerol 3-phosphotransferase</fullName>
    </alternativeName>
    <alternativeName>
        <fullName evidence="1">Glycerokinase</fullName>
        <shortName evidence="1">GK</shortName>
    </alternativeName>
</protein>
<name>GLPK_HAEIE</name>
<gene>
    <name evidence="1" type="primary">glpK</name>
    <name type="ordered locus">CGSHiEE_08730</name>
</gene>
<feature type="chain" id="PRO_1000020734" description="Glycerol kinase">
    <location>
        <begin position="1"/>
        <end position="503"/>
    </location>
</feature>
<feature type="binding site" evidence="1">
    <location>
        <position position="14"/>
    </location>
    <ligand>
        <name>ADP</name>
        <dbReference type="ChEBI" id="CHEBI:456216"/>
    </ligand>
</feature>
<feature type="binding site" evidence="1">
    <location>
        <position position="14"/>
    </location>
    <ligand>
        <name>ATP</name>
        <dbReference type="ChEBI" id="CHEBI:30616"/>
    </ligand>
</feature>
<feature type="binding site" evidence="1">
    <location>
        <position position="14"/>
    </location>
    <ligand>
        <name>sn-glycerol 3-phosphate</name>
        <dbReference type="ChEBI" id="CHEBI:57597"/>
    </ligand>
</feature>
<feature type="binding site" evidence="1">
    <location>
        <position position="15"/>
    </location>
    <ligand>
        <name>ATP</name>
        <dbReference type="ChEBI" id="CHEBI:30616"/>
    </ligand>
</feature>
<feature type="binding site" evidence="1">
    <location>
        <position position="16"/>
    </location>
    <ligand>
        <name>ATP</name>
        <dbReference type="ChEBI" id="CHEBI:30616"/>
    </ligand>
</feature>
<feature type="binding site" evidence="1">
    <location>
        <position position="18"/>
    </location>
    <ligand>
        <name>ADP</name>
        <dbReference type="ChEBI" id="CHEBI:456216"/>
    </ligand>
</feature>
<feature type="binding site" evidence="1">
    <location>
        <position position="84"/>
    </location>
    <ligand>
        <name>glycerol</name>
        <dbReference type="ChEBI" id="CHEBI:17754"/>
    </ligand>
</feature>
<feature type="binding site" evidence="1">
    <location>
        <position position="84"/>
    </location>
    <ligand>
        <name>sn-glycerol 3-phosphate</name>
        <dbReference type="ChEBI" id="CHEBI:57597"/>
    </ligand>
</feature>
<feature type="binding site" evidence="1">
    <location>
        <position position="85"/>
    </location>
    <ligand>
        <name>glycerol</name>
        <dbReference type="ChEBI" id="CHEBI:17754"/>
    </ligand>
</feature>
<feature type="binding site" evidence="1">
    <location>
        <position position="85"/>
    </location>
    <ligand>
        <name>sn-glycerol 3-phosphate</name>
        <dbReference type="ChEBI" id="CHEBI:57597"/>
    </ligand>
</feature>
<feature type="binding site" evidence="1">
    <location>
        <position position="136"/>
    </location>
    <ligand>
        <name>glycerol</name>
        <dbReference type="ChEBI" id="CHEBI:17754"/>
    </ligand>
</feature>
<feature type="binding site" evidence="1">
    <location>
        <position position="136"/>
    </location>
    <ligand>
        <name>sn-glycerol 3-phosphate</name>
        <dbReference type="ChEBI" id="CHEBI:57597"/>
    </ligand>
</feature>
<feature type="binding site" evidence="1">
    <location>
        <position position="246"/>
    </location>
    <ligand>
        <name>glycerol</name>
        <dbReference type="ChEBI" id="CHEBI:17754"/>
    </ligand>
</feature>
<feature type="binding site" evidence="1">
    <location>
        <position position="246"/>
    </location>
    <ligand>
        <name>sn-glycerol 3-phosphate</name>
        <dbReference type="ChEBI" id="CHEBI:57597"/>
    </ligand>
</feature>
<feature type="binding site" evidence="1">
    <location>
        <position position="247"/>
    </location>
    <ligand>
        <name>glycerol</name>
        <dbReference type="ChEBI" id="CHEBI:17754"/>
    </ligand>
</feature>
<feature type="binding site" evidence="1">
    <location>
        <position position="268"/>
    </location>
    <ligand>
        <name>ADP</name>
        <dbReference type="ChEBI" id="CHEBI:456216"/>
    </ligand>
</feature>
<feature type="binding site" evidence="1">
    <location>
        <position position="268"/>
    </location>
    <ligand>
        <name>ATP</name>
        <dbReference type="ChEBI" id="CHEBI:30616"/>
    </ligand>
</feature>
<feature type="binding site" evidence="1">
    <location>
        <position position="311"/>
    </location>
    <ligand>
        <name>ADP</name>
        <dbReference type="ChEBI" id="CHEBI:456216"/>
    </ligand>
</feature>
<feature type="binding site" evidence="1">
    <location>
        <position position="311"/>
    </location>
    <ligand>
        <name>ATP</name>
        <dbReference type="ChEBI" id="CHEBI:30616"/>
    </ligand>
</feature>
<feature type="binding site" evidence="1">
    <location>
        <position position="315"/>
    </location>
    <ligand>
        <name>ATP</name>
        <dbReference type="ChEBI" id="CHEBI:30616"/>
    </ligand>
</feature>
<feature type="binding site" evidence="1">
    <location>
        <position position="412"/>
    </location>
    <ligand>
        <name>ADP</name>
        <dbReference type="ChEBI" id="CHEBI:456216"/>
    </ligand>
</feature>
<feature type="binding site" evidence="1">
    <location>
        <position position="412"/>
    </location>
    <ligand>
        <name>ATP</name>
        <dbReference type="ChEBI" id="CHEBI:30616"/>
    </ligand>
</feature>
<feature type="binding site" evidence="1">
    <location>
        <position position="416"/>
    </location>
    <ligand>
        <name>ADP</name>
        <dbReference type="ChEBI" id="CHEBI:456216"/>
    </ligand>
</feature>
<reference key="1">
    <citation type="journal article" date="2007" name="Genome Biol.">
        <title>Characterization and modeling of the Haemophilus influenzae core and supragenomes based on the complete genomic sequences of Rd and 12 clinical nontypeable strains.</title>
        <authorList>
            <person name="Hogg J.S."/>
            <person name="Hu F.Z."/>
            <person name="Janto B."/>
            <person name="Boissy R."/>
            <person name="Hayes J."/>
            <person name="Keefe R."/>
            <person name="Post J.C."/>
            <person name="Ehrlich G.D."/>
        </authorList>
    </citation>
    <scope>NUCLEOTIDE SEQUENCE [LARGE SCALE GENOMIC DNA]</scope>
    <source>
        <strain>PittEE</strain>
    </source>
</reference>
<comment type="function">
    <text evidence="1">Key enzyme in the regulation of glycerol uptake and metabolism. Catalyzes the phosphorylation of glycerol to yield sn-glycerol 3-phosphate.</text>
</comment>
<comment type="catalytic activity">
    <reaction evidence="1">
        <text>glycerol + ATP = sn-glycerol 3-phosphate + ADP + H(+)</text>
        <dbReference type="Rhea" id="RHEA:21644"/>
        <dbReference type="ChEBI" id="CHEBI:15378"/>
        <dbReference type="ChEBI" id="CHEBI:17754"/>
        <dbReference type="ChEBI" id="CHEBI:30616"/>
        <dbReference type="ChEBI" id="CHEBI:57597"/>
        <dbReference type="ChEBI" id="CHEBI:456216"/>
        <dbReference type="EC" id="2.7.1.30"/>
    </reaction>
</comment>
<comment type="activity regulation">
    <text evidence="1">Inhibited by fructose 1,6-bisphosphate (FBP).</text>
</comment>
<comment type="pathway">
    <text evidence="1">Polyol metabolism; glycerol degradation via glycerol kinase pathway; sn-glycerol 3-phosphate from glycerol: step 1/1.</text>
</comment>
<comment type="similarity">
    <text evidence="1">Belongs to the FGGY kinase family.</text>
</comment>
<keyword id="KW-0067">ATP-binding</keyword>
<keyword id="KW-0319">Glycerol metabolism</keyword>
<keyword id="KW-0418">Kinase</keyword>
<keyword id="KW-0547">Nucleotide-binding</keyword>
<keyword id="KW-0808">Transferase</keyword>
<organism>
    <name type="scientific">Haemophilus influenzae (strain PittEE)</name>
    <dbReference type="NCBI Taxonomy" id="374930"/>
    <lineage>
        <taxon>Bacteria</taxon>
        <taxon>Pseudomonadati</taxon>
        <taxon>Pseudomonadota</taxon>
        <taxon>Gammaproteobacteria</taxon>
        <taxon>Pasteurellales</taxon>
        <taxon>Pasteurellaceae</taxon>
        <taxon>Haemophilus</taxon>
    </lineage>
</organism>